<feature type="chain" id="PRO_0000243468" description="Large ribosomal subunit protein bL12">
    <location>
        <begin position="1"/>
        <end position="131"/>
    </location>
</feature>
<sequence>MSAKTDEILDSLKSLSLLEASELVKQIEEAFGVSAAASAGVVMAAPGAAAGGDGADAAEEKTEFEVVLESFEASSKIKVLKEVRNATGLGLGEAKALVEAAPKTIKEGATKEDAEALKKAIEAVGGKVTLK</sequence>
<reference key="1">
    <citation type="journal article" date="2007" name="PLoS Genet.">
        <title>Patterns and implications of gene gain and loss in the evolution of Prochlorococcus.</title>
        <authorList>
            <person name="Kettler G.C."/>
            <person name="Martiny A.C."/>
            <person name="Huang K."/>
            <person name="Zucker J."/>
            <person name="Coleman M.L."/>
            <person name="Rodrigue S."/>
            <person name="Chen F."/>
            <person name="Lapidus A."/>
            <person name="Ferriera S."/>
            <person name="Johnson J."/>
            <person name="Steglich C."/>
            <person name="Church G.M."/>
            <person name="Richardson P."/>
            <person name="Chisholm S.W."/>
        </authorList>
    </citation>
    <scope>NUCLEOTIDE SEQUENCE [LARGE SCALE GENOMIC DNA]</scope>
    <source>
        <strain>NATL2A</strain>
    </source>
</reference>
<accession>Q46HH2</accession>
<proteinExistence type="inferred from homology"/>
<comment type="function">
    <text evidence="1">Forms part of the ribosomal stalk which helps the ribosome interact with GTP-bound translation factors. Is thus essential for accurate translation.</text>
</comment>
<comment type="subunit">
    <text evidence="1">Homodimer. Part of the ribosomal stalk of the 50S ribosomal subunit. Forms a multimeric L10(L12)X complex, where L10 forms an elongated spine to which 2 to 4 L12 dimers bind in a sequential fashion. Binds GTP-bound translation factors.</text>
</comment>
<comment type="similarity">
    <text evidence="1">Belongs to the bacterial ribosomal protein bL12 family.</text>
</comment>
<organism>
    <name type="scientific">Prochlorococcus marinus (strain NATL2A)</name>
    <dbReference type="NCBI Taxonomy" id="59920"/>
    <lineage>
        <taxon>Bacteria</taxon>
        <taxon>Bacillati</taxon>
        <taxon>Cyanobacteriota</taxon>
        <taxon>Cyanophyceae</taxon>
        <taxon>Synechococcales</taxon>
        <taxon>Prochlorococcaceae</taxon>
        <taxon>Prochlorococcus</taxon>
    </lineage>
</organism>
<protein>
    <recommendedName>
        <fullName evidence="1">Large ribosomal subunit protein bL12</fullName>
    </recommendedName>
    <alternativeName>
        <fullName evidence="2">50S ribosomal protein L7/L12</fullName>
    </alternativeName>
</protein>
<evidence type="ECO:0000255" key="1">
    <source>
        <dbReference type="HAMAP-Rule" id="MF_00368"/>
    </source>
</evidence>
<evidence type="ECO:0000305" key="2"/>
<keyword id="KW-1185">Reference proteome</keyword>
<keyword id="KW-0687">Ribonucleoprotein</keyword>
<keyword id="KW-0689">Ribosomal protein</keyword>
<gene>
    <name evidence="1" type="primary">rplL</name>
    <name evidence="1" type="synonym">rpl12</name>
    <name type="ordered locus">PMN2A_1568</name>
</gene>
<name>RL7_PROMT</name>
<dbReference type="EMBL" id="CP000095">
    <property type="protein sequence ID" value="AAZ59056.1"/>
    <property type="molecule type" value="Genomic_DNA"/>
</dbReference>
<dbReference type="RefSeq" id="WP_011294201.1">
    <property type="nucleotide sequence ID" value="NC_007335.2"/>
</dbReference>
<dbReference type="SMR" id="Q46HH2"/>
<dbReference type="STRING" id="59920.PMN2A_1568"/>
<dbReference type="KEGG" id="pmn:PMN2A_1568"/>
<dbReference type="HOGENOM" id="CLU_086499_3_0_3"/>
<dbReference type="OrthoDB" id="9811748at2"/>
<dbReference type="PhylomeDB" id="Q46HH2"/>
<dbReference type="Proteomes" id="UP000002535">
    <property type="component" value="Chromosome"/>
</dbReference>
<dbReference type="GO" id="GO:0022625">
    <property type="term" value="C:cytosolic large ribosomal subunit"/>
    <property type="evidence" value="ECO:0007669"/>
    <property type="project" value="TreeGrafter"/>
</dbReference>
<dbReference type="GO" id="GO:0003729">
    <property type="term" value="F:mRNA binding"/>
    <property type="evidence" value="ECO:0007669"/>
    <property type="project" value="TreeGrafter"/>
</dbReference>
<dbReference type="GO" id="GO:0003735">
    <property type="term" value="F:structural constituent of ribosome"/>
    <property type="evidence" value="ECO:0007669"/>
    <property type="project" value="InterPro"/>
</dbReference>
<dbReference type="GO" id="GO:0006412">
    <property type="term" value="P:translation"/>
    <property type="evidence" value="ECO:0007669"/>
    <property type="project" value="UniProtKB-UniRule"/>
</dbReference>
<dbReference type="CDD" id="cd00387">
    <property type="entry name" value="Ribosomal_L7_L12"/>
    <property type="match status" value="1"/>
</dbReference>
<dbReference type="FunFam" id="3.30.1390.10:FF:000001">
    <property type="entry name" value="50S ribosomal protein L7/L12"/>
    <property type="match status" value="1"/>
</dbReference>
<dbReference type="Gene3D" id="3.30.1390.10">
    <property type="match status" value="1"/>
</dbReference>
<dbReference type="Gene3D" id="1.20.5.710">
    <property type="entry name" value="Single helix bin"/>
    <property type="match status" value="1"/>
</dbReference>
<dbReference type="HAMAP" id="MF_00368">
    <property type="entry name" value="Ribosomal_bL12"/>
    <property type="match status" value="1"/>
</dbReference>
<dbReference type="InterPro" id="IPR000206">
    <property type="entry name" value="Ribosomal_bL12"/>
</dbReference>
<dbReference type="InterPro" id="IPR013823">
    <property type="entry name" value="Ribosomal_bL12_C"/>
</dbReference>
<dbReference type="InterPro" id="IPR014719">
    <property type="entry name" value="Ribosomal_bL12_C/ClpS-like"/>
</dbReference>
<dbReference type="InterPro" id="IPR008932">
    <property type="entry name" value="Ribosomal_bL12_oligo"/>
</dbReference>
<dbReference type="InterPro" id="IPR036235">
    <property type="entry name" value="Ribosomal_bL12_oligo_N_sf"/>
</dbReference>
<dbReference type="NCBIfam" id="TIGR00855">
    <property type="entry name" value="L12"/>
    <property type="match status" value="1"/>
</dbReference>
<dbReference type="PANTHER" id="PTHR45987">
    <property type="entry name" value="39S RIBOSOMAL PROTEIN L12"/>
    <property type="match status" value="1"/>
</dbReference>
<dbReference type="PANTHER" id="PTHR45987:SF4">
    <property type="entry name" value="LARGE RIBOSOMAL SUBUNIT PROTEIN BL12M"/>
    <property type="match status" value="1"/>
</dbReference>
<dbReference type="Pfam" id="PF00542">
    <property type="entry name" value="Ribosomal_L12"/>
    <property type="match status" value="1"/>
</dbReference>
<dbReference type="Pfam" id="PF16320">
    <property type="entry name" value="Ribosomal_L12_N"/>
    <property type="match status" value="1"/>
</dbReference>
<dbReference type="SUPFAM" id="SSF54736">
    <property type="entry name" value="ClpS-like"/>
    <property type="match status" value="1"/>
</dbReference>
<dbReference type="SUPFAM" id="SSF48300">
    <property type="entry name" value="Ribosomal protein L7/12, oligomerisation (N-terminal) domain"/>
    <property type="match status" value="1"/>
</dbReference>